<keyword id="KW-0800">Toxin</keyword>
<evidence type="ECO:0000250" key="1">
    <source>
        <dbReference type="UniProtKB" id="A0A067SLB9"/>
    </source>
</evidence>
<evidence type="ECO:0000269" key="2">
    <source>
    </source>
</evidence>
<evidence type="ECO:0000303" key="3">
    <source>
    </source>
</evidence>
<evidence type="ECO:0000305" key="4"/>
<evidence type="ECO:0000305" key="5">
    <source>
    </source>
</evidence>
<evidence type="ECO:0000305" key="6">
    <source>
    </source>
</evidence>
<feature type="propeptide" id="PRO_0000443689" evidence="6">
    <location>
        <begin position="1"/>
        <end position="10"/>
    </location>
</feature>
<feature type="peptide" id="PRO_0000443690" description="Toxin MSD4" evidence="6">
    <location>
        <begin position="11"/>
        <end position="17"/>
    </location>
</feature>
<feature type="propeptide" id="PRO_0000443691" evidence="6">
    <location>
        <begin position="18"/>
        <end position="34"/>
    </location>
</feature>
<feature type="cross-link" description="Cyclopeptide (Val-Pro)" evidence="6">
    <location>
        <begin position="11"/>
        <end position="17"/>
    </location>
</feature>
<organism>
    <name type="scientific">Amanita exitialis</name>
    <name type="common">Guangzhou destroying angel</name>
    <dbReference type="NCBI Taxonomy" id="262245"/>
    <lineage>
        <taxon>Eukaryota</taxon>
        <taxon>Fungi</taxon>
        <taxon>Dikarya</taxon>
        <taxon>Basidiomycota</taxon>
        <taxon>Agaricomycotina</taxon>
        <taxon>Agaricomycetes</taxon>
        <taxon>Agaricomycetidae</taxon>
        <taxon>Agaricales</taxon>
        <taxon>Pluteineae</taxon>
        <taxon>Amanitaceae</taxon>
        <taxon>Amanita</taxon>
    </lineage>
</organism>
<accession>A0A023IWD9</accession>
<accession>U5L407</accession>
<name>MSD4_AMAEX</name>
<protein>
    <recommendedName>
        <fullName evidence="3">MSDIN-like toxin proprotein 4</fullName>
    </recommendedName>
    <component>
        <recommendedName>
            <fullName evidence="3">Toxin MSD4</fullName>
        </recommendedName>
    </component>
</protein>
<reference key="1">
    <citation type="journal article" date="2013" name="Gene">
        <title>Illumina-based de novo transcriptome sequencing and analysis of Amanita exitialis basidiocarps.</title>
        <authorList>
            <person name="Li P."/>
            <person name="Deng W.Q."/>
            <person name="Li T.H."/>
            <person name="Song B."/>
            <person name="Shen Y.H."/>
        </authorList>
    </citation>
    <scope>NUCLEOTIDE SEQUENCE [MRNA]</scope>
    <scope>FUNCTION</scope>
    <scope>TISSUE SPECIFICITY</scope>
</reference>
<reference key="2">
    <citation type="journal article" date="2014" name="Toxicon">
        <title>The molecular diversity of toxin gene families in lethal Amanita mushrooms.</title>
        <authorList>
            <person name="Li P."/>
            <person name="Deng W."/>
            <person name="Li T."/>
        </authorList>
    </citation>
    <scope>NUCLEOTIDE SEQUENCE [GENOMIC DNA] OF 1-32</scope>
    <scope>FUNCTION</scope>
    <scope>TISSUE SPECIFICITY</scope>
</reference>
<proteinExistence type="evidence at transcript level"/>
<dbReference type="EMBL" id="KF552075">
    <property type="protein sequence ID" value="AHB18703.1"/>
    <property type="molecule type" value="Genomic_DNA"/>
</dbReference>
<dbReference type="EMBL" id="KF387481">
    <property type="protein sequence ID" value="AGW83705.1"/>
    <property type="molecule type" value="mRNA"/>
</dbReference>
<dbReference type="EMBL" id="KF387493">
    <property type="protein sequence ID" value="AGW83717.1"/>
    <property type="molecule type" value="mRNA"/>
</dbReference>
<dbReference type="GO" id="GO:0090729">
    <property type="term" value="F:toxin activity"/>
    <property type="evidence" value="ECO:0007669"/>
    <property type="project" value="UniProtKB-KW"/>
</dbReference>
<dbReference type="InterPro" id="IPR027582">
    <property type="entry name" value="Amanitin/phalloidin"/>
</dbReference>
<dbReference type="NCBIfam" id="TIGR04309">
    <property type="entry name" value="amanitin"/>
    <property type="match status" value="1"/>
</dbReference>
<sequence>MSDINATRLPVWIGYSPCVGDDCIALLTRGEGLC</sequence>
<comment type="function">
    <text evidence="5 6">Probable toxin that belongs to the MSDIN-like toxin family responsible for a large number of food poisoning cases and deaths (PubMed:24050899, PubMed:24613547).</text>
</comment>
<comment type="tissue specificity">
    <text evidence="2">Expressed in basidiocarps (PubMed:24050899).</text>
</comment>
<comment type="PTM">
    <text evidence="1">Processed by the macrocyclase-peptidase enzyme POPB to yield a toxic cyclic heptapeptide (By similarity). POPB first removes 10 residues from the N-terminus (By similarity). Conformational trapping of the remaining peptide forces the enzyme to release this intermediate rather than proceed to macrocyclization (By similarity). The enzyme rebinds the remaining peptide in a different conformation and catalyzes macrocyclization of the N-terminal 7 residues (By similarity).</text>
</comment>
<comment type="similarity">
    <text evidence="4">Belongs to the MSDIN fungal toxin family.</text>
</comment>